<sequence length="752" mass="82371">MAPAVAVVAAAAAFPFRLFSAEARRNTKGSRSKRGSARPLKPSPPPRPSASSSAAGGGGATTFTRLPLRNAPASVEVTLDRFPTANPEPRASTFTRRNGERLGDDEEDEEEEEDEVELGLRGATTFARLPLRDSPDGGDLTIGHFDAGVAPQEGLRSRAISRQLVEHLDDVEEEEEEQVVSRLDIFEGAKGREARAFLPDEDDEDDDVVVFDPEYDGYSDDEEFVATAVEQSPRGDAIAVAELEKLKYDNDDDDDDDDEVVVFHPDDDEEVDVFEDYDDDEEEETKEKGVPAVMRCFDTAKIYAKAGDGGNGVVAFRREKYVPLGGPSGGDGGRGGNVFVEVDGDMNSLLPFRKSVHFRAGRGAHGQGRQQAGAKGDDVVVKVPPGTVVRSAAGDVELLELMRPGQRALLLPGGRGGRGNAAFKSGTNKAPRIAEKGEKGPEMWIDLELKLVADVGIVGAPNAGKSTLLTAISAAKPTIANYPFTTLLPNLGVVSLDFDATMVVADLPGLLEGAHRGYGLGHEFLRHSERCSVLVHVVDGSGEQPEYEFEAVRLELELFSPSLVDKPYIVVYNKMDLPEASERWNKFQEKLQAEGIEPYCISAMNRQGTEDVVLAAYKVLQKDRQRMKDDEEWNGPENLNHVADAIKRERRAPMNEFEIFHDKGTNTWNVVGAGIERFVQMTNWQYSESLKRFQHALEACGVNKTLIKRGVKEGDTVVVGEMEMVWTDEPSKTRSSKTMNSKDDSVRWPEFG</sequence>
<dbReference type="EMBL" id="AP004570">
    <property type="protein sequence ID" value="BAC83597.1"/>
    <property type="status" value="ALT_SEQ"/>
    <property type="molecule type" value="Genomic_DNA"/>
</dbReference>
<dbReference type="EMBL" id="AP008213">
    <property type="protein sequence ID" value="BAF22500.1"/>
    <property type="molecule type" value="Genomic_DNA"/>
</dbReference>
<dbReference type="EMBL" id="AP014963">
    <property type="status" value="NOT_ANNOTATED_CDS"/>
    <property type="molecule type" value="Genomic_DNA"/>
</dbReference>
<dbReference type="RefSeq" id="XP_015644898.1">
    <property type="nucleotide sequence ID" value="XM_015789412.1"/>
</dbReference>
<dbReference type="SMR" id="Q0D3S3"/>
<dbReference type="FunCoup" id="Q0D3S3">
    <property type="interactions" value="293"/>
</dbReference>
<dbReference type="STRING" id="39947.Q0D3S3"/>
<dbReference type="PaxDb" id="39947-Q0D3S3"/>
<dbReference type="EnsemblPlants" id="Os07t0669200-01">
    <property type="protein sequence ID" value="Os07t0669200-01"/>
    <property type="gene ID" value="Os07g0669200"/>
</dbReference>
<dbReference type="Gramene" id="Os07t0669200-01">
    <property type="protein sequence ID" value="Os07t0669200-01"/>
    <property type="gene ID" value="Os07g0669200"/>
</dbReference>
<dbReference type="KEGG" id="dosa:Os07g0669200"/>
<dbReference type="eggNOG" id="KOG1489">
    <property type="taxonomic scope" value="Eukaryota"/>
</dbReference>
<dbReference type="InParanoid" id="Q0D3S3"/>
<dbReference type="OrthoDB" id="347018at2759"/>
<dbReference type="Proteomes" id="UP000000763">
    <property type="component" value="Chromosome 7"/>
</dbReference>
<dbReference type="Proteomes" id="UP000059680">
    <property type="component" value="Chromosome 7"/>
</dbReference>
<dbReference type="GO" id="GO:0009706">
    <property type="term" value="C:chloroplast inner membrane"/>
    <property type="evidence" value="ECO:0007669"/>
    <property type="project" value="EnsemblPlants"/>
</dbReference>
<dbReference type="GO" id="GO:0009570">
    <property type="term" value="C:chloroplast stroma"/>
    <property type="evidence" value="ECO:0007669"/>
    <property type="project" value="EnsemblPlants"/>
</dbReference>
<dbReference type="GO" id="GO:0005739">
    <property type="term" value="C:mitochondrion"/>
    <property type="evidence" value="ECO:0000318"/>
    <property type="project" value="GO_Central"/>
</dbReference>
<dbReference type="GO" id="GO:0005525">
    <property type="term" value="F:GTP binding"/>
    <property type="evidence" value="ECO:0000318"/>
    <property type="project" value="GO_Central"/>
</dbReference>
<dbReference type="GO" id="GO:0003924">
    <property type="term" value="F:GTPase activity"/>
    <property type="evidence" value="ECO:0000318"/>
    <property type="project" value="GO_Central"/>
</dbReference>
<dbReference type="GO" id="GO:0000287">
    <property type="term" value="F:magnesium ion binding"/>
    <property type="evidence" value="ECO:0007669"/>
    <property type="project" value="InterPro"/>
</dbReference>
<dbReference type="GO" id="GO:0003729">
    <property type="term" value="F:mRNA binding"/>
    <property type="evidence" value="ECO:0007669"/>
    <property type="project" value="EnsemblPlants"/>
</dbReference>
<dbReference type="GO" id="GO:0009658">
    <property type="term" value="P:chloroplast organization"/>
    <property type="evidence" value="ECO:0000315"/>
    <property type="project" value="UniProtKB"/>
</dbReference>
<dbReference type="GO" id="GO:0009793">
    <property type="term" value="P:embryo development ending in seed dormancy"/>
    <property type="evidence" value="ECO:0007669"/>
    <property type="project" value="EnsemblPlants"/>
</dbReference>
<dbReference type="GO" id="GO:0009416">
    <property type="term" value="P:response to light stimulus"/>
    <property type="evidence" value="ECO:0007669"/>
    <property type="project" value="EnsemblPlants"/>
</dbReference>
<dbReference type="GO" id="GO:0006364">
    <property type="term" value="P:rRNA processing"/>
    <property type="evidence" value="ECO:0007669"/>
    <property type="project" value="EnsemblPlants"/>
</dbReference>
<dbReference type="GO" id="GO:0010027">
    <property type="term" value="P:thylakoid membrane organization"/>
    <property type="evidence" value="ECO:0007669"/>
    <property type="project" value="EnsemblPlants"/>
</dbReference>
<dbReference type="CDD" id="cd01898">
    <property type="entry name" value="Obg"/>
    <property type="match status" value="1"/>
</dbReference>
<dbReference type="FunFam" id="2.70.210.12:FF:000001">
    <property type="entry name" value="GTPase Obg"/>
    <property type="match status" value="1"/>
</dbReference>
<dbReference type="FunFam" id="3.40.50.300:FF:000515">
    <property type="entry name" value="GTPase Obg"/>
    <property type="match status" value="1"/>
</dbReference>
<dbReference type="FunFam" id="3.30.300.350:FF:000003">
    <property type="entry name" value="Probable GTP-binding protein OBGC1, chloroplastic"/>
    <property type="match status" value="1"/>
</dbReference>
<dbReference type="Gene3D" id="3.30.300.350">
    <property type="entry name" value="GTP-binding protein OBG, C-terminal domain"/>
    <property type="match status" value="1"/>
</dbReference>
<dbReference type="Gene3D" id="2.70.210.12">
    <property type="entry name" value="GTP1/OBG domain"/>
    <property type="match status" value="1"/>
</dbReference>
<dbReference type="Gene3D" id="3.40.50.300">
    <property type="entry name" value="P-loop containing nucleotide triphosphate hydrolases"/>
    <property type="match status" value="1"/>
</dbReference>
<dbReference type="HAMAP" id="MF_01454">
    <property type="entry name" value="GTPase_Obg"/>
    <property type="match status" value="1"/>
</dbReference>
<dbReference type="InterPro" id="IPR031167">
    <property type="entry name" value="G_OBG"/>
</dbReference>
<dbReference type="InterPro" id="IPR006073">
    <property type="entry name" value="GTP-bd"/>
</dbReference>
<dbReference type="InterPro" id="IPR014100">
    <property type="entry name" value="GTP-bd_Obg/CgtA"/>
</dbReference>
<dbReference type="InterPro" id="IPR036346">
    <property type="entry name" value="GTP-bd_prot_GTP1/OBG_C_sf"/>
</dbReference>
<dbReference type="InterPro" id="IPR006074">
    <property type="entry name" value="GTP1-OBG_CS"/>
</dbReference>
<dbReference type="InterPro" id="IPR006169">
    <property type="entry name" value="GTP1_OBG_dom"/>
</dbReference>
<dbReference type="InterPro" id="IPR036726">
    <property type="entry name" value="GTP1_OBG_dom_sf"/>
</dbReference>
<dbReference type="InterPro" id="IPR045086">
    <property type="entry name" value="OBG_GTPase"/>
</dbReference>
<dbReference type="InterPro" id="IPR015349">
    <property type="entry name" value="OCT_dom"/>
</dbReference>
<dbReference type="InterPro" id="IPR027417">
    <property type="entry name" value="P-loop_NTPase"/>
</dbReference>
<dbReference type="NCBIfam" id="TIGR02729">
    <property type="entry name" value="Obg_CgtA"/>
    <property type="match status" value="1"/>
</dbReference>
<dbReference type="NCBIfam" id="TIGR03595">
    <property type="entry name" value="Obg_CgtA_exten"/>
    <property type="match status" value="1"/>
</dbReference>
<dbReference type="NCBIfam" id="NF008954">
    <property type="entry name" value="PRK12296.1"/>
    <property type="match status" value="1"/>
</dbReference>
<dbReference type="NCBIfam" id="NF008955">
    <property type="entry name" value="PRK12297.1"/>
    <property type="match status" value="1"/>
</dbReference>
<dbReference type="NCBIfam" id="NF008956">
    <property type="entry name" value="PRK12299.1"/>
    <property type="match status" value="1"/>
</dbReference>
<dbReference type="PANTHER" id="PTHR11702">
    <property type="entry name" value="DEVELOPMENTALLY REGULATED GTP-BINDING PROTEIN-RELATED"/>
    <property type="match status" value="1"/>
</dbReference>
<dbReference type="PANTHER" id="PTHR11702:SF44">
    <property type="entry name" value="GTP-BINDING PROTEIN OBGC, CHLOROPLASTIC"/>
    <property type="match status" value="1"/>
</dbReference>
<dbReference type="Pfam" id="PF09269">
    <property type="entry name" value="DUF1967"/>
    <property type="match status" value="1"/>
</dbReference>
<dbReference type="Pfam" id="PF01018">
    <property type="entry name" value="GTP1_OBG"/>
    <property type="match status" value="1"/>
</dbReference>
<dbReference type="Pfam" id="PF01926">
    <property type="entry name" value="MMR_HSR1"/>
    <property type="match status" value="1"/>
</dbReference>
<dbReference type="PRINTS" id="PR00326">
    <property type="entry name" value="GTP1OBG"/>
</dbReference>
<dbReference type="SUPFAM" id="SSF102741">
    <property type="entry name" value="Obg GTP-binding protein C-terminal domain"/>
    <property type="match status" value="1"/>
</dbReference>
<dbReference type="SUPFAM" id="SSF82051">
    <property type="entry name" value="Obg GTP-binding protein N-terminal domain"/>
    <property type="match status" value="1"/>
</dbReference>
<dbReference type="SUPFAM" id="SSF52540">
    <property type="entry name" value="P-loop containing nucleoside triphosphate hydrolases"/>
    <property type="match status" value="1"/>
</dbReference>
<dbReference type="PROSITE" id="PS51710">
    <property type="entry name" value="G_OBG"/>
    <property type="match status" value="1"/>
</dbReference>
<dbReference type="PROSITE" id="PS00905">
    <property type="entry name" value="GTP1_OBG"/>
    <property type="match status" value="1"/>
</dbReference>
<dbReference type="PROSITE" id="PS51883">
    <property type="entry name" value="OBG"/>
    <property type="match status" value="1"/>
</dbReference>
<dbReference type="PROSITE" id="PS51881">
    <property type="entry name" value="OCT"/>
    <property type="match status" value="1"/>
</dbReference>
<reference key="1">
    <citation type="journal article" date="2005" name="Nature">
        <title>The map-based sequence of the rice genome.</title>
        <authorList>
            <consortium name="International rice genome sequencing project (IRGSP)"/>
        </authorList>
    </citation>
    <scope>NUCLEOTIDE SEQUENCE [LARGE SCALE GENOMIC DNA]</scope>
    <source>
        <strain>cv. Nipponbare</strain>
    </source>
</reference>
<reference key="2">
    <citation type="journal article" date="2008" name="Nucleic Acids Res.">
        <title>The rice annotation project database (RAP-DB): 2008 update.</title>
        <authorList>
            <consortium name="The rice annotation project (RAP)"/>
        </authorList>
    </citation>
    <scope>GENOME REANNOTATION</scope>
    <source>
        <strain>cv. Nipponbare</strain>
    </source>
</reference>
<reference key="3">
    <citation type="journal article" date="2013" name="Rice">
        <title>Improvement of the Oryza sativa Nipponbare reference genome using next generation sequence and optical map data.</title>
        <authorList>
            <person name="Kawahara Y."/>
            <person name="de la Bastide M."/>
            <person name="Hamilton J.P."/>
            <person name="Kanamori H."/>
            <person name="McCombie W.R."/>
            <person name="Ouyang S."/>
            <person name="Schwartz D.C."/>
            <person name="Tanaka T."/>
            <person name="Wu J."/>
            <person name="Zhou S."/>
            <person name="Childs K.L."/>
            <person name="Davidson R.M."/>
            <person name="Lin H."/>
            <person name="Quesada-Ocampo L."/>
            <person name="Vaillancourt B."/>
            <person name="Sakai H."/>
            <person name="Lee S.S."/>
            <person name="Kim J."/>
            <person name="Numa H."/>
            <person name="Itoh T."/>
            <person name="Buell C.R."/>
            <person name="Matsumoto T."/>
        </authorList>
    </citation>
    <scope>GENOME REANNOTATION</scope>
    <source>
        <strain>cv. Nipponbare</strain>
    </source>
</reference>
<reference key="4">
    <citation type="journal article" date="2012" name="Plant J.">
        <title>Functional characterization of ObgC in ribosome biogenesis during chloroplast development.</title>
        <authorList>
            <person name="Bang W.Y."/>
            <person name="Chen J."/>
            <person name="Jeong I.S."/>
            <person name="Kim S.W."/>
            <person name="Kim C.W."/>
            <person name="Jung H.S."/>
            <person name="Lee K.H."/>
            <person name="Kweon H.S."/>
            <person name="Yoko I."/>
            <person name="Shiina T."/>
            <person name="Bahk J.D."/>
        </authorList>
    </citation>
    <scope>FUNCTION</scope>
    <scope>DISRUPTION PHENOTYPE</scope>
</reference>
<organism>
    <name type="scientific">Oryza sativa subsp. japonica</name>
    <name type="common">Rice</name>
    <dbReference type="NCBI Taxonomy" id="39947"/>
    <lineage>
        <taxon>Eukaryota</taxon>
        <taxon>Viridiplantae</taxon>
        <taxon>Streptophyta</taxon>
        <taxon>Embryophyta</taxon>
        <taxon>Tracheophyta</taxon>
        <taxon>Spermatophyta</taxon>
        <taxon>Magnoliopsida</taxon>
        <taxon>Liliopsida</taxon>
        <taxon>Poales</taxon>
        <taxon>Poaceae</taxon>
        <taxon>BOP clade</taxon>
        <taxon>Oryzoideae</taxon>
        <taxon>Oryzeae</taxon>
        <taxon>Oryzinae</taxon>
        <taxon>Oryza</taxon>
        <taxon>Oryza sativa</taxon>
    </lineage>
</organism>
<accession>Q0D3S3</accession>
<accession>Q7EZT3</accession>
<comment type="function">
    <text evidence="6">Probable GTP-binding protein that plays a crucial role in chloroplast development and is required for leaf greening during plant growth.</text>
</comment>
<comment type="cofactor">
    <cofactor evidence="1">
        <name>Mg(2+)</name>
        <dbReference type="ChEBI" id="CHEBI:18420"/>
    </cofactor>
</comment>
<comment type="subcellular location">
    <subcellularLocation>
        <location evidence="7">Plastid</location>
        <location evidence="7">Chloroplast</location>
    </subcellularLocation>
</comment>
<comment type="disruption phenotype">
    <text evidence="6">Severe chlorotic phenotype during early leaf development.</text>
</comment>
<comment type="similarity">
    <text evidence="7">Belongs to the TRAFAC class OBG-HflX-like GTPase superfamily. OBG GTPase family.</text>
</comment>
<comment type="sequence caution" evidence="7">
    <conflict type="erroneous gene model prediction">
        <sequence resource="EMBL-CDS" id="BAC83597"/>
    </conflict>
</comment>
<evidence type="ECO:0000250" key="1"/>
<evidence type="ECO:0000255" key="2"/>
<evidence type="ECO:0000255" key="3">
    <source>
        <dbReference type="PROSITE-ProRule" id="PRU01229"/>
    </source>
</evidence>
<evidence type="ECO:0000255" key="4">
    <source>
        <dbReference type="PROSITE-ProRule" id="PRU01231"/>
    </source>
</evidence>
<evidence type="ECO:0000256" key="5">
    <source>
        <dbReference type="SAM" id="MobiDB-lite"/>
    </source>
</evidence>
<evidence type="ECO:0000269" key="6">
    <source>
    </source>
</evidence>
<evidence type="ECO:0000305" key="7"/>
<proteinExistence type="inferred from homology"/>
<feature type="transit peptide" description="Chloroplast" evidence="2">
    <location>
        <begin position="1"/>
        <end position="90"/>
    </location>
</feature>
<feature type="chain" id="PRO_0000424828" description="Probable GTP-binding protein OBGC1, chloroplastic">
    <location>
        <begin position="91"/>
        <end position="752"/>
    </location>
</feature>
<feature type="domain" description="Obg" evidence="4">
    <location>
        <begin position="294"/>
        <end position="452"/>
    </location>
</feature>
<feature type="domain" description="OBG-type G">
    <location>
        <begin position="453"/>
        <end position="621"/>
    </location>
</feature>
<feature type="domain" description="OCT" evidence="3">
    <location>
        <begin position="649"/>
        <end position="728"/>
    </location>
</feature>
<feature type="region of interest" description="Disordered" evidence="5">
    <location>
        <begin position="19"/>
        <end position="121"/>
    </location>
</feature>
<feature type="region of interest" description="Disordered" evidence="5">
    <location>
        <begin position="728"/>
        <end position="752"/>
    </location>
</feature>
<feature type="compositionally biased region" description="Basic residues" evidence="5">
    <location>
        <begin position="26"/>
        <end position="36"/>
    </location>
</feature>
<feature type="compositionally biased region" description="Acidic residues" evidence="5">
    <location>
        <begin position="103"/>
        <end position="117"/>
    </location>
</feature>
<feature type="compositionally biased region" description="Basic and acidic residues" evidence="5">
    <location>
        <begin position="740"/>
        <end position="752"/>
    </location>
</feature>
<feature type="binding site" evidence="1">
    <location>
        <begin position="459"/>
        <end position="466"/>
    </location>
    <ligand>
        <name>GTP</name>
        <dbReference type="ChEBI" id="CHEBI:37565"/>
    </ligand>
</feature>
<feature type="binding site" evidence="1">
    <location>
        <position position="466"/>
    </location>
    <ligand>
        <name>Mg(2+)</name>
        <dbReference type="ChEBI" id="CHEBI:18420"/>
    </ligand>
</feature>
<feature type="binding site" evidence="1">
    <location>
        <begin position="484"/>
        <end position="488"/>
    </location>
    <ligand>
        <name>GTP</name>
        <dbReference type="ChEBI" id="CHEBI:37565"/>
    </ligand>
</feature>
<feature type="binding site" evidence="1">
    <location>
        <position position="486"/>
    </location>
    <ligand>
        <name>Mg(2+)</name>
        <dbReference type="ChEBI" id="CHEBI:18420"/>
    </ligand>
</feature>
<feature type="binding site" evidence="1">
    <location>
        <begin position="506"/>
        <end position="509"/>
    </location>
    <ligand>
        <name>GTP</name>
        <dbReference type="ChEBI" id="CHEBI:37565"/>
    </ligand>
</feature>
<feature type="binding site" evidence="1">
    <location>
        <begin position="573"/>
        <end position="576"/>
    </location>
    <ligand>
        <name>GTP</name>
        <dbReference type="ChEBI" id="CHEBI:37565"/>
    </ligand>
</feature>
<feature type="binding site" evidence="1">
    <location>
        <begin position="602"/>
        <end position="604"/>
    </location>
    <ligand>
        <name>GTP</name>
        <dbReference type="ChEBI" id="CHEBI:37565"/>
    </ligand>
</feature>
<gene>
    <name type="primary">OBGC1</name>
    <name type="ordered locus">Os07g0669200</name>
    <name type="ordered locus">LOC_Os07g47300</name>
    <name type="ORF">P0625E02.120</name>
</gene>
<keyword id="KW-0150">Chloroplast</keyword>
<keyword id="KW-0342">GTP-binding</keyword>
<keyword id="KW-0460">Magnesium</keyword>
<keyword id="KW-0479">Metal-binding</keyword>
<keyword id="KW-0547">Nucleotide-binding</keyword>
<keyword id="KW-0934">Plastid</keyword>
<keyword id="KW-1185">Reference proteome</keyword>
<keyword id="KW-0809">Transit peptide</keyword>
<protein>
    <recommendedName>
        <fullName>Probable GTP-binding protein OBGC1, chloroplastic</fullName>
    </recommendedName>
</protein>
<name>OBGC1_ORYSJ</name>